<gene>
    <name type="primary">HECTD3</name>
</gene>
<dbReference type="EC" id="2.3.2.26"/>
<dbReference type="EMBL" id="AK024809">
    <property type="protein sequence ID" value="BAB15015.1"/>
    <property type="status" value="ALT_SEQ"/>
    <property type="molecule type" value="mRNA"/>
</dbReference>
<dbReference type="EMBL" id="AK056873">
    <property type="protein sequence ID" value="BAG51819.1"/>
    <property type="molecule type" value="mRNA"/>
</dbReference>
<dbReference type="EMBL" id="AK091583">
    <property type="protein sequence ID" value="BAG52386.1"/>
    <property type="molecule type" value="mRNA"/>
</dbReference>
<dbReference type="EMBL" id="AL359473">
    <property type="status" value="NOT_ANNOTATED_CDS"/>
    <property type="molecule type" value="Genomic_DNA"/>
</dbReference>
<dbReference type="EMBL" id="CH471059">
    <property type="protein sequence ID" value="EAX07010.1"/>
    <property type="molecule type" value="Genomic_DNA"/>
</dbReference>
<dbReference type="EMBL" id="BC019105">
    <property type="protein sequence ID" value="AAH19105.2"/>
    <property type="molecule type" value="mRNA"/>
</dbReference>
<dbReference type="CCDS" id="CCDS41318.1">
    <molecule id="Q5T447-1"/>
</dbReference>
<dbReference type="RefSeq" id="NP_078878.3">
    <molecule id="Q5T447-1"/>
    <property type="nucleotide sequence ID" value="NM_024602.5"/>
</dbReference>
<dbReference type="SMR" id="Q5T447"/>
<dbReference type="BioGRID" id="122781">
    <property type="interactions" value="145"/>
</dbReference>
<dbReference type="FunCoup" id="Q5T447">
    <property type="interactions" value="972"/>
</dbReference>
<dbReference type="IntAct" id="Q5T447">
    <property type="interactions" value="90"/>
</dbReference>
<dbReference type="MINT" id="Q5T447"/>
<dbReference type="STRING" id="9606.ENSP00000361245"/>
<dbReference type="GlyGen" id="Q5T447">
    <property type="glycosylation" value="1 site, 1 O-linked glycan (1 site)"/>
</dbReference>
<dbReference type="iPTMnet" id="Q5T447"/>
<dbReference type="PhosphoSitePlus" id="Q5T447"/>
<dbReference type="BioMuta" id="HECTD3"/>
<dbReference type="DMDM" id="74744877"/>
<dbReference type="jPOST" id="Q5T447"/>
<dbReference type="MassIVE" id="Q5T447"/>
<dbReference type="PaxDb" id="9606-ENSP00000361245"/>
<dbReference type="PeptideAtlas" id="Q5T447"/>
<dbReference type="ProteomicsDB" id="64431">
    <molecule id="Q5T447-1"/>
</dbReference>
<dbReference type="ProteomicsDB" id="64432">
    <molecule id="Q5T447-2"/>
</dbReference>
<dbReference type="Pumba" id="Q5T447"/>
<dbReference type="Antibodypedia" id="32577">
    <property type="antibodies" value="112 antibodies from 24 providers"/>
</dbReference>
<dbReference type="DNASU" id="79654"/>
<dbReference type="Ensembl" id="ENST00000372168.7">
    <molecule id="Q5T447-2"/>
    <property type="protein sequence ID" value="ENSP00000361241.3"/>
    <property type="gene ID" value="ENSG00000126107.15"/>
</dbReference>
<dbReference type="Ensembl" id="ENST00000372172.5">
    <molecule id="Q5T447-1"/>
    <property type="protein sequence ID" value="ENSP00000361245.4"/>
    <property type="gene ID" value="ENSG00000126107.15"/>
</dbReference>
<dbReference type="GeneID" id="79654"/>
<dbReference type="KEGG" id="hsa:79654"/>
<dbReference type="MANE-Select" id="ENST00000372172.5">
    <property type="protein sequence ID" value="ENSP00000361245.4"/>
    <property type="RefSeq nucleotide sequence ID" value="NM_024602.6"/>
    <property type="RefSeq protein sequence ID" value="NP_078878.3"/>
</dbReference>
<dbReference type="UCSC" id="uc001cmy.5">
    <molecule id="Q5T447-1"/>
    <property type="organism name" value="human"/>
</dbReference>
<dbReference type="AGR" id="HGNC:26117"/>
<dbReference type="CTD" id="79654"/>
<dbReference type="DisGeNET" id="79654"/>
<dbReference type="GeneCards" id="HECTD3"/>
<dbReference type="HGNC" id="HGNC:26117">
    <property type="gene designation" value="HECTD3"/>
</dbReference>
<dbReference type="HPA" id="ENSG00000126107">
    <property type="expression patterns" value="Low tissue specificity"/>
</dbReference>
<dbReference type="MalaCards" id="HECTD3"/>
<dbReference type="MIM" id="618638">
    <property type="type" value="gene"/>
</dbReference>
<dbReference type="neXtProt" id="NX_Q5T447"/>
<dbReference type="OpenTargets" id="ENSG00000126107"/>
<dbReference type="PharmGKB" id="PA142671698"/>
<dbReference type="VEuPathDB" id="HostDB:ENSG00000126107"/>
<dbReference type="eggNOG" id="KOG0939">
    <property type="taxonomic scope" value="Eukaryota"/>
</dbReference>
<dbReference type="GeneTree" id="ENSGT00940000159923"/>
<dbReference type="HOGENOM" id="CLU_002173_11_0_1"/>
<dbReference type="InParanoid" id="Q5T447"/>
<dbReference type="OMA" id="LMCKHAD"/>
<dbReference type="OrthoDB" id="8068875at2759"/>
<dbReference type="PAN-GO" id="Q5T447">
    <property type="GO annotations" value="2 GO annotations based on evolutionary models"/>
</dbReference>
<dbReference type="PhylomeDB" id="Q5T447"/>
<dbReference type="BRENDA" id="2.3.2.26">
    <property type="organism ID" value="2681"/>
</dbReference>
<dbReference type="PathwayCommons" id="Q5T447"/>
<dbReference type="Reactome" id="R-HSA-983168">
    <property type="pathway name" value="Antigen processing: Ubiquitination &amp; Proteasome degradation"/>
</dbReference>
<dbReference type="SignaLink" id="Q5T447"/>
<dbReference type="SIGNOR" id="Q5T447"/>
<dbReference type="UniPathway" id="UPA00143"/>
<dbReference type="BioGRID-ORCS" id="79654">
    <property type="hits" value="47 hits in 1196 CRISPR screens"/>
</dbReference>
<dbReference type="CD-CODE" id="1A18FFC4">
    <property type="entry name" value="Paraspeckle"/>
</dbReference>
<dbReference type="ChiTaRS" id="HECTD3">
    <property type="organism name" value="human"/>
</dbReference>
<dbReference type="GenomeRNAi" id="79654"/>
<dbReference type="Pharos" id="Q5T447">
    <property type="development level" value="Tdark"/>
</dbReference>
<dbReference type="PRO" id="PR:Q5T447"/>
<dbReference type="Proteomes" id="UP000005640">
    <property type="component" value="Chromosome 1"/>
</dbReference>
<dbReference type="RNAct" id="Q5T447">
    <property type="molecule type" value="protein"/>
</dbReference>
<dbReference type="Bgee" id="ENSG00000126107">
    <property type="expression patterns" value="Expressed in ileal mucosa and 185 other cell types or tissues"/>
</dbReference>
<dbReference type="GO" id="GO:0048471">
    <property type="term" value="C:perinuclear region of cytoplasm"/>
    <property type="evidence" value="ECO:0000250"/>
    <property type="project" value="UniProtKB"/>
</dbReference>
<dbReference type="GO" id="GO:0019905">
    <property type="term" value="F:syntaxin binding"/>
    <property type="evidence" value="ECO:0007669"/>
    <property type="project" value="Ensembl"/>
</dbReference>
<dbReference type="GO" id="GO:0004842">
    <property type="term" value="F:ubiquitin-protein transferase activity"/>
    <property type="evidence" value="ECO:0000314"/>
    <property type="project" value="UniProtKB"/>
</dbReference>
<dbReference type="GO" id="GO:0043161">
    <property type="term" value="P:proteasome-mediated ubiquitin-dependent protein catabolic process"/>
    <property type="evidence" value="ECO:0000314"/>
    <property type="project" value="UniProtKB"/>
</dbReference>
<dbReference type="GO" id="GO:0016567">
    <property type="term" value="P:protein ubiquitination"/>
    <property type="evidence" value="ECO:0007669"/>
    <property type="project" value="UniProtKB-UniPathway"/>
</dbReference>
<dbReference type="CDD" id="cd08666">
    <property type="entry name" value="APC10-HECTD3"/>
    <property type="match status" value="1"/>
</dbReference>
<dbReference type="FunFam" id="2.60.120.260:FF:000067">
    <property type="entry name" value="Putative E3 ubiquitin-protein ligase HECTD3"/>
    <property type="match status" value="1"/>
</dbReference>
<dbReference type="FunFam" id="3.30.2410.10:FF:000018">
    <property type="entry name" value="Putative E3 ubiquitin-protein ligase HECTD3"/>
    <property type="match status" value="1"/>
</dbReference>
<dbReference type="FunFam" id="3.90.1750.10:FF:000025">
    <property type="entry name" value="Putative E3 ubiquitin-protein ligase HECTD3"/>
    <property type="match status" value="1"/>
</dbReference>
<dbReference type="Gene3D" id="2.60.120.260">
    <property type="entry name" value="Galactose-binding domain-like"/>
    <property type="match status" value="1"/>
</dbReference>
<dbReference type="Gene3D" id="3.30.2160.10">
    <property type="entry name" value="Hect, E3 ligase catalytic domain"/>
    <property type="match status" value="1"/>
</dbReference>
<dbReference type="Gene3D" id="3.30.2410.10">
    <property type="entry name" value="Hect, E3 ligase catalytic domain"/>
    <property type="match status" value="1"/>
</dbReference>
<dbReference type="Gene3D" id="3.90.1750.10">
    <property type="entry name" value="Hect, E3 ligase catalytic domains"/>
    <property type="match status" value="1"/>
</dbReference>
<dbReference type="InterPro" id="IPR004939">
    <property type="entry name" value="APC_su10/DOC_dom"/>
</dbReference>
<dbReference type="InterPro" id="IPR008979">
    <property type="entry name" value="Galactose-bd-like_sf"/>
</dbReference>
<dbReference type="InterPro" id="IPR000569">
    <property type="entry name" value="HECT_dom"/>
</dbReference>
<dbReference type="InterPro" id="IPR035983">
    <property type="entry name" value="Hect_E3_ubiquitin_ligase"/>
</dbReference>
<dbReference type="InterPro" id="IPR042469">
    <property type="entry name" value="HECTD3"/>
</dbReference>
<dbReference type="PANTHER" id="PTHR46654">
    <property type="entry name" value="E3 UBIQUITIN-PROTEIN LIGASE HECTD3"/>
    <property type="match status" value="1"/>
</dbReference>
<dbReference type="PANTHER" id="PTHR46654:SF1">
    <property type="entry name" value="E3 UBIQUITIN-PROTEIN LIGASE HECTD3"/>
    <property type="match status" value="1"/>
</dbReference>
<dbReference type="Pfam" id="PF03256">
    <property type="entry name" value="ANAPC10"/>
    <property type="match status" value="1"/>
</dbReference>
<dbReference type="Pfam" id="PF00632">
    <property type="entry name" value="HECT"/>
    <property type="match status" value="1"/>
</dbReference>
<dbReference type="SMART" id="SM01337">
    <property type="entry name" value="APC10"/>
    <property type="match status" value="1"/>
</dbReference>
<dbReference type="SMART" id="SM00119">
    <property type="entry name" value="HECTc"/>
    <property type="match status" value="1"/>
</dbReference>
<dbReference type="SUPFAM" id="SSF49785">
    <property type="entry name" value="Galactose-binding domain-like"/>
    <property type="match status" value="1"/>
</dbReference>
<dbReference type="SUPFAM" id="SSF56204">
    <property type="entry name" value="Hect, E3 ligase catalytic domain"/>
    <property type="match status" value="1"/>
</dbReference>
<dbReference type="PROSITE" id="PS51284">
    <property type="entry name" value="DOC"/>
    <property type="match status" value="1"/>
</dbReference>
<dbReference type="PROSITE" id="PS50237">
    <property type="entry name" value="HECT"/>
    <property type="match status" value="1"/>
</dbReference>
<comment type="function">
    <text evidence="2 5">E3 ubiquitin ligases accepts ubiquitin from an E2 ubiquitin-conjugating enzyme in the form of a thioester and then directly transfers the ubiquitin to targeted substrates. Mediates ubiquitination of TRIOBP and its subsequent proteasomal degradation, thus facilitating cell cycle progression by regulating the turn-over of TRIOBP. Mediates also ubiquitination of STX8 (By similarity).</text>
</comment>
<comment type="catalytic activity">
    <reaction>
        <text>S-ubiquitinyl-[E2 ubiquitin-conjugating enzyme]-L-cysteine + [acceptor protein]-L-lysine = [E2 ubiquitin-conjugating enzyme]-L-cysteine + N(6)-ubiquitinyl-[acceptor protein]-L-lysine.</text>
        <dbReference type="EC" id="2.3.2.26"/>
    </reaction>
</comment>
<comment type="pathway">
    <text>Protein modification; protein ubiquitination.</text>
</comment>
<comment type="subunit">
    <text evidence="2 5">Interacts with TRIOBP. Interacts with STX8 (By similarity).</text>
</comment>
<comment type="interaction">
    <interactant intactId="EBI-2691157">
        <id>Q5T447</id>
    </interactant>
    <interactant intactId="EBI-368321">
        <id>O60437</id>
        <label>PPL</label>
    </interactant>
    <organismsDiffer>false</organismsDiffer>
    <experiments>3</experiments>
</comment>
<comment type="interaction">
    <interactant intactId="EBI-25854793">
        <id>Q5T447-2</id>
    </interactant>
    <interactant intactId="EBI-348399">
        <id>P22607</id>
        <label>FGFR3</label>
    </interactant>
    <organismsDiffer>false</organismsDiffer>
    <experiments>3</experiments>
</comment>
<comment type="interaction">
    <interactant intactId="EBI-25854793">
        <id>Q5T447-2</id>
    </interactant>
    <interactant intactId="EBI-8285963">
        <id>Q14957</id>
        <label>GRIN2C</label>
    </interactant>
    <organismsDiffer>false</organismsDiffer>
    <experiments>3</experiments>
</comment>
<comment type="interaction">
    <interactant intactId="EBI-25854793">
        <id>Q5T447-2</id>
    </interactant>
    <interactant intactId="EBI-351506">
        <id>P06396</id>
        <label>GSN</label>
    </interactant>
    <organismsDiffer>false</organismsDiffer>
    <experiments>3</experiments>
</comment>
<comment type="interaction">
    <interactant intactId="EBI-25854793">
        <id>Q5T447-2</id>
    </interactant>
    <interactant intactId="EBI-741480">
        <id>Q9UMX0</id>
        <label>UBQLN1</label>
    </interactant>
    <organismsDiffer>false</organismsDiffer>
    <experiments>3</experiments>
</comment>
<comment type="interaction">
    <interactant intactId="EBI-25854793">
        <id>Q5T447-2</id>
    </interactant>
    <interactant intactId="EBI-25900580">
        <id>Q9Y649</id>
    </interactant>
    <organismsDiffer>false</organismsDiffer>
    <experiments>3</experiments>
</comment>
<comment type="subcellular location">
    <subcellularLocation>
        <location evidence="1">Cytoplasm</location>
        <location evidence="1">Perinuclear region</location>
    </subcellularLocation>
</comment>
<comment type="alternative products">
    <event type="alternative splicing"/>
    <isoform>
        <id>Q5T447-1</id>
        <name>1</name>
        <sequence type="displayed"/>
    </isoform>
    <isoform>
        <id>Q5T447-2</id>
        <name>2</name>
        <sequence type="described" ref="VSP_019439 VSP_019440"/>
    </isoform>
</comment>
<comment type="sequence caution" evidence="7">
    <conflict type="miscellaneous discrepancy">
        <sequence resource="EMBL-CDS" id="BAB15015"/>
    </conflict>
    <text>Contaminating sequence. Sequence of unknown origin in the N-terminal part.</text>
</comment>
<sequence>MAGPGPGAVLESPRQLLGRVRFLAEAARSLRAGRPLPAALAFVPREVLYKLYKDPAGPSRVLLPVWEAEGLGLRVGAAGPAPGTGSGPLRAARDSIELRRGACVRTTGEELCNGHGLWVKLTKEQLAEHLGDCGLQEGWLLVCRPAEGGARLVPIDTPNHLQRQQQLFGVDYRPVLRWEQVVDLTYSHRLGSRPQPAEAYAEAVQRLLYVPPTWTYECDEDLIHFLYDHLGKEDENLGSVKQYVESIDVSSYTEEFNVSCLTDSNADTYWESDGSQCQHWVRLTMKKGTIVKKLLLTVDTTDDNFMPKRVVVYGGEGDNLKKLSDVSIDETLIGDVCVLEDMTVHLPIIEIRIVECRDDGIDVRLRGVKIKSSRQRELGLNADLFQPTSLVRYPRLEGTDPEVLYRRAVLLQRFIKILDSVLHHLVPAWDHTLGTFSEIKQVKQFLLLSRQRPGLVAQCLRDSESSKPSFMPRLYINRRLAMEHRACPSRDPACKNAVFTQVYEGLKPSDKYEKPLDYRWPMRYDQWWECKFIAEGIIDQGGGFRDSLADMSEELCPSSADTPVPLPFFVRTANQGNGTGEARDMYVPNPSCRDFAKYEWIGQLMGAALRGKEFLVLALPGFVWKQLSGEEVSWSKDFPAVDSVLVKLLEVMEGMDKETFEFKFGKELTFTTVLSDQQVVELIPGGAGIVVGYGDRSRFIQLVQKARLEESKEQVAAMQAGLLKVVPQAVLDLLTWQELEKKVCGDPEVTVDALRKLTRFEDFEPSDSRVQYFWEALNNFTNEDRSRFLRFVTGRSRLPARIYIYPDKLGYETTDALPESSTCSSTLFLPHYASAKVCEEKLRYAAYNCVAIDTDMSPWEE</sequence>
<feature type="initiator methionine" description="Removed" evidence="8 9">
    <location>
        <position position="1"/>
    </location>
</feature>
<feature type="chain" id="PRO_0000241445" description="E3 ubiquitin-protein ligase HECTD3">
    <location>
        <begin position="2"/>
        <end position="861"/>
    </location>
</feature>
<feature type="domain" description="DOC" evidence="4">
    <location>
        <begin position="219"/>
        <end position="397"/>
    </location>
</feature>
<feature type="domain" description="HECT" evidence="3">
    <location>
        <begin position="512"/>
        <end position="857"/>
    </location>
</feature>
<feature type="active site" description="Glycyl thioester intermediate">
    <location>
        <position position="823"/>
    </location>
</feature>
<feature type="modified residue" description="N-acetylalanine" evidence="8 9">
    <location>
        <position position="2"/>
    </location>
</feature>
<feature type="modified residue" description="Phosphoserine" evidence="10">
    <location>
        <position position="12"/>
    </location>
</feature>
<feature type="splice variant" id="VSP_019439" description="In isoform 2." evidence="6">
    <location>
        <begin position="1"/>
        <end position="390"/>
    </location>
</feature>
<feature type="splice variant" id="VSP_019440" description="In isoform 2." evidence="6">
    <original>VRYPRLEGTDPEVLYRRAVLLQ</original>
    <variation>MLGSWGCYRYAKLFSCSLSTHA</variation>
    <location>
        <begin position="391"/>
        <end position="412"/>
    </location>
</feature>
<feature type="mutagenesis site" description="Loss of ubiquitin-ligase activity." evidence="5">
    <original>C</original>
    <variation>A</variation>
    <location>
        <position position="823"/>
    </location>
</feature>
<accession>Q5T447</accession>
<accession>B3KPV7</accession>
<accession>B3KRH4</accession>
<accession>Q5T448</accession>
<accession>Q9H783</accession>
<name>HECD3_HUMAN</name>
<protein>
    <recommendedName>
        <fullName>E3 ubiquitin-protein ligase HECTD3</fullName>
        <ecNumber>2.3.2.26</ecNumber>
    </recommendedName>
    <alternativeName>
        <fullName>HECT domain-containing protein 3</fullName>
    </alternativeName>
    <alternativeName>
        <fullName>HECT-type E3 ubiquitin transferase HECTD3</fullName>
    </alternativeName>
</protein>
<organism>
    <name type="scientific">Homo sapiens</name>
    <name type="common">Human</name>
    <dbReference type="NCBI Taxonomy" id="9606"/>
    <lineage>
        <taxon>Eukaryota</taxon>
        <taxon>Metazoa</taxon>
        <taxon>Chordata</taxon>
        <taxon>Craniata</taxon>
        <taxon>Vertebrata</taxon>
        <taxon>Euteleostomi</taxon>
        <taxon>Mammalia</taxon>
        <taxon>Eutheria</taxon>
        <taxon>Euarchontoglires</taxon>
        <taxon>Primates</taxon>
        <taxon>Haplorrhini</taxon>
        <taxon>Catarrhini</taxon>
        <taxon>Hominidae</taxon>
        <taxon>Homo</taxon>
    </lineage>
</organism>
<evidence type="ECO:0000250" key="1"/>
<evidence type="ECO:0000250" key="2">
    <source>
        <dbReference type="UniProtKB" id="Q3U487"/>
    </source>
</evidence>
<evidence type="ECO:0000255" key="3">
    <source>
        <dbReference type="PROSITE-ProRule" id="PRU00104"/>
    </source>
</evidence>
<evidence type="ECO:0000255" key="4">
    <source>
        <dbReference type="PROSITE-ProRule" id="PRU00614"/>
    </source>
</evidence>
<evidence type="ECO:0000269" key="5">
    <source>
    </source>
</evidence>
<evidence type="ECO:0000303" key="6">
    <source>
    </source>
</evidence>
<evidence type="ECO:0000305" key="7"/>
<evidence type="ECO:0007744" key="8">
    <source>
    </source>
</evidence>
<evidence type="ECO:0007744" key="9">
    <source>
    </source>
</evidence>
<evidence type="ECO:0007744" key="10">
    <source>
    </source>
</evidence>
<keyword id="KW-0007">Acetylation</keyword>
<keyword id="KW-0025">Alternative splicing</keyword>
<keyword id="KW-0963">Cytoplasm</keyword>
<keyword id="KW-0597">Phosphoprotein</keyword>
<keyword id="KW-1267">Proteomics identification</keyword>
<keyword id="KW-1185">Reference proteome</keyword>
<keyword id="KW-0808">Transferase</keyword>
<keyword id="KW-0833">Ubl conjugation pathway</keyword>
<reference key="1">
    <citation type="journal article" date="2004" name="Nat. Genet.">
        <title>Complete sequencing and characterization of 21,243 full-length human cDNAs.</title>
        <authorList>
            <person name="Ota T."/>
            <person name="Suzuki Y."/>
            <person name="Nishikawa T."/>
            <person name="Otsuki T."/>
            <person name="Sugiyama T."/>
            <person name="Irie R."/>
            <person name="Wakamatsu A."/>
            <person name="Hayashi K."/>
            <person name="Sato H."/>
            <person name="Nagai K."/>
            <person name="Kimura K."/>
            <person name="Makita H."/>
            <person name="Sekine M."/>
            <person name="Obayashi M."/>
            <person name="Nishi T."/>
            <person name="Shibahara T."/>
            <person name="Tanaka T."/>
            <person name="Ishii S."/>
            <person name="Yamamoto J."/>
            <person name="Saito K."/>
            <person name="Kawai Y."/>
            <person name="Isono Y."/>
            <person name="Nakamura Y."/>
            <person name="Nagahari K."/>
            <person name="Murakami K."/>
            <person name="Yasuda T."/>
            <person name="Iwayanagi T."/>
            <person name="Wagatsuma M."/>
            <person name="Shiratori A."/>
            <person name="Sudo H."/>
            <person name="Hosoiri T."/>
            <person name="Kaku Y."/>
            <person name="Kodaira H."/>
            <person name="Kondo H."/>
            <person name="Sugawara M."/>
            <person name="Takahashi M."/>
            <person name="Kanda K."/>
            <person name="Yokoi T."/>
            <person name="Furuya T."/>
            <person name="Kikkawa E."/>
            <person name="Omura Y."/>
            <person name="Abe K."/>
            <person name="Kamihara K."/>
            <person name="Katsuta N."/>
            <person name="Sato K."/>
            <person name="Tanikawa M."/>
            <person name="Yamazaki M."/>
            <person name="Ninomiya K."/>
            <person name="Ishibashi T."/>
            <person name="Yamashita H."/>
            <person name="Murakawa K."/>
            <person name="Fujimori K."/>
            <person name="Tanai H."/>
            <person name="Kimata M."/>
            <person name="Watanabe M."/>
            <person name="Hiraoka S."/>
            <person name="Chiba Y."/>
            <person name="Ishida S."/>
            <person name="Ono Y."/>
            <person name="Takiguchi S."/>
            <person name="Watanabe S."/>
            <person name="Yosida M."/>
            <person name="Hotuta T."/>
            <person name="Kusano J."/>
            <person name="Kanehori K."/>
            <person name="Takahashi-Fujii A."/>
            <person name="Hara H."/>
            <person name="Tanase T.-O."/>
            <person name="Nomura Y."/>
            <person name="Togiya S."/>
            <person name="Komai F."/>
            <person name="Hara R."/>
            <person name="Takeuchi K."/>
            <person name="Arita M."/>
            <person name="Imose N."/>
            <person name="Musashino K."/>
            <person name="Yuuki H."/>
            <person name="Oshima A."/>
            <person name="Sasaki N."/>
            <person name="Aotsuka S."/>
            <person name="Yoshikawa Y."/>
            <person name="Matsunawa H."/>
            <person name="Ichihara T."/>
            <person name="Shiohata N."/>
            <person name="Sano S."/>
            <person name="Moriya S."/>
            <person name="Momiyama H."/>
            <person name="Satoh N."/>
            <person name="Takami S."/>
            <person name="Terashima Y."/>
            <person name="Suzuki O."/>
            <person name="Nakagawa S."/>
            <person name="Senoh A."/>
            <person name="Mizoguchi H."/>
            <person name="Goto Y."/>
            <person name="Shimizu F."/>
            <person name="Wakebe H."/>
            <person name="Hishigaki H."/>
            <person name="Watanabe T."/>
            <person name="Sugiyama A."/>
            <person name="Takemoto M."/>
            <person name="Kawakami B."/>
            <person name="Yamazaki M."/>
            <person name="Watanabe K."/>
            <person name="Kumagai A."/>
            <person name="Itakura S."/>
            <person name="Fukuzumi Y."/>
            <person name="Fujimori Y."/>
            <person name="Komiyama M."/>
            <person name="Tashiro H."/>
            <person name="Tanigami A."/>
            <person name="Fujiwara T."/>
            <person name="Ono T."/>
            <person name="Yamada K."/>
            <person name="Fujii Y."/>
            <person name="Ozaki K."/>
            <person name="Hirao M."/>
            <person name="Ohmori Y."/>
            <person name="Kawabata A."/>
            <person name="Hikiji T."/>
            <person name="Kobatake N."/>
            <person name="Inagaki H."/>
            <person name="Ikema Y."/>
            <person name="Okamoto S."/>
            <person name="Okitani R."/>
            <person name="Kawakami T."/>
            <person name="Noguchi S."/>
            <person name="Itoh T."/>
            <person name="Shigeta K."/>
            <person name="Senba T."/>
            <person name="Matsumura K."/>
            <person name="Nakajima Y."/>
            <person name="Mizuno T."/>
            <person name="Morinaga M."/>
            <person name="Sasaki M."/>
            <person name="Togashi T."/>
            <person name="Oyama M."/>
            <person name="Hata H."/>
            <person name="Watanabe M."/>
            <person name="Komatsu T."/>
            <person name="Mizushima-Sugano J."/>
            <person name="Satoh T."/>
            <person name="Shirai Y."/>
            <person name="Takahashi Y."/>
            <person name="Nakagawa K."/>
            <person name="Okumura K."/>
            <person name="Nagase T."/>
            <person name="Nomura N."/>
            <person name="Kikuchi H."/>
            <person name="Masuho Y."/>
            <person name="Yamashita R."/>
            <person name="Nakai K."/>
            <person name="Yada T."/>
            <person name="Nakamura Y."/>
            <person name="Ohara O."/>
            <person name="Isogai T."/>
            <person name="Sugano S."/>
        </authorList>
    </citation>
    <scope>NUCLEOTIDE SEQUENCE [LARGE SCALE MRNA] (ISOFORM 2)</scope>
    <scope>NUCLEOTIDE SEQUENCE [LARGE SCALE MRNA] OF 644-861 (ISOFORM 1)</scope>
    <source>
        <tissue>Brain</tissue>
        <tissue>Prostate</tissue>
    </source>
</reference>
<reference key="2">
    <citation type="journal article" date="2006" name="Nature">
        <title>The DNA sequence and biological annotation of human chromosome 1.</title>
        <authorList>
            <person name="Gregory S.G."/>
            <person name="Barlow K.F."/>
            <person name="McLay K.E."/>
            <person name="Kaul R."/>
            <person name="Swarbreck D."/>
            <person name="Dunham A."/>
            <person name="Scott C.E."/>
            <person name="Howe K.L."/>
            <person name="Woodfine K."/>
            <person name="Spencer C.C.A."/>
            <person name="Jones M.C."/>
            <person name="Gillson C."/>
            <person name="Searle S."/>
            <person name="Zhou Y."/>
            <person name="Kokocinski F."/>
            <person name="McDonald L."/>
            <person name="Evans R."/>
            <person name="Phillips K."/>
            <person name="Atkinson A."/>
            <person name="Cooper R."/>
            <person name="Jones C."/>
            <person name="Hall R.E."/>
            <person name="Andrews T.D."/>
            <person name="Lloyd C."/>
            <person name="Ainscough R."/>
            <person name="Almeida J.P."/>
            <person name="Ambrose K.D."/>
            <person name="Anderson F."/>
            <person name="Andrew R.W."/>
            <person name="Ashwell R.I.S."/>
            <person name="Aubin K."/>
            <person name="Babbage A.K."/>
            <person name="Bagguley C.L."/>
            <person name="Bailey J."/>
            <person name="Beasley H."/>
            <person name="Bethel G."/>
            <person name="Bird C.P."/>
            <person name="Bray-Allen S."/>
            <person name="Brown J.Y."/>
            <person name="Brown A.J."/>
            <person name="Buckley D."/>
            <person name="Burton J."/>
            <person name="Bye J."/>
            <person name="Carder C."/>
            <person name="Chapman J.C."/>
            <person name="Clark S.Y."/>
            <person name="Clarke G."/>
            <person name="Clee C."/>
            <person name="Cobley V."/>
            <person name="Collier R.E."/>
            <person name="Corby N."/>
            <person name="Coville G.J."/>
            <person name="Davies J."/>
            <person name="Deadman R."/>
            <person name="Dunn M."/>
            <person name="Earthrowl M."/>
            <person name="Ellington A.G."/>
            <person name="Errington H."/>
            <person name="Frankish A."/>
            <person name="Frankland J."/>
            <person name="French L."/>
            <person name="Garner P."/>
            <person name="Garnett J."/>
            <person name="Gay L."/>
            <person name="Ghori M.R.J."/>
            <person name="Gibson R."/>
            <person name="Gilby L.M."/>
            <person name="Gillett W."/>
            <person name="Glithero R.J."/>
            <person name="Grafham D.V."/>
            <person name="Griffiths C."/>
            <person name="Griffiths-Jones S."/>
            <person name="Grocock R."/>
            <person name="Hammond S."/>
            <person name="Harrison E.S.I."/>
            <person name="Hart E."/>
            <person name="Haugen E."/>
            <person name="Heath P.D."/>
            <person name="Holmes S."/>
            <person name="Holt K."/>
            <person name="Howden P.J."/>
            <person name="Hunt A.R."/>
            <person name="Hunt S.E."/>
            <person name="Hunter G."/>
            <person name="Isherwood J."/>
            <person name="James R."/>
            <person name="Johnson C."/>
            <person name="Johnson D."/>
            <person name="Joy A."/>
            <person name="Kay M."/>
            <person name="Kershaw J.K."/>
            <person name="Kibukawa M."/>
            <person name="Kimberley A.M."/>
            <person name="King A."/>
            <person name="Knights A.J."/>
            <person name="Lad H."/>
            <person name="Laird G."/>
            <person name="Lawlor S."/>
            <person name="Leongamornlert D.A."/>
            <person name="Lloyd D.M."/>
            <person name="Loveland J."/>
            <person name="Lovell J."/>
            <person name="Lush M.J."/>
            <person name="Lyne R."/>
            <person name="Martin S."/>
            <person name="Mashreghi-Mohammadi M."/>
            <person name="Matthews L."/>
            <person name="Matthews N.S.W."/>
            <person name="McLaren S."/>
            <person name="Milne S."/>
            <person name="Mistry S."/>
            <person name="Moore M.J.F."/>
            <person name="Nickerson T."/>
            <person name="O'Dell C.N."/>
            <person name="Oliver K."/>
            <person name="Palmeiri A."/>
            <person name="Palmer S.A."/>
            <person name="Parker A."/>
            <person name="Patel D."/>
            <person name="Pearce A.V."/>
            <person name="Peck A.I."/>
            <person name="Pelan S."/>
            <person name="Phelps K."/>
            <person name="Phillimore B.J."/>
            <person name="Plumb R."/>
            <person name="Rajan J."/>
            <person name="Raymond C."/>
            <person name="Rouse G."/>
            <person name="Saenphimmachak C."/>
            <person name="Sehra H.K."/>
            <person name="Sheridan E."/>
            <person name="Shownkeen R."/>
            <person name="Sims S."/>
            <person name="Skuce C.D."/>
            <person name="Smith M."/>
            <person name="Steward C."/>
            <person name="Subramanian S."/>
            <person name="Sycamore N."/>
            <person name="Tracey A."/>
            <person name="Tromans A."/>
            <person name="Van Helmond Z."/>
            <person name="Wall M."/>
            <person name="Wallis J.M."/>
            <person name="White S."/>
            <person name="Whitehead S.L."/>
            <person name="Wilkinson J.E."/>
            <person name="Willey D.L."/>
            <person name="Williams H."/>
            <person name="Wilming L."/>
            <person name="Wray P.W."/>
            <person name="Wu Z."/>
            <person name="Coulson A."/>
            <person name="Vaudin M."/>
            <person name="Sulston J.E."/>
            <person name="Durbin R.M."/>
            <person name="Hubbard T."/>
            <person name="Wooster R."/>
            <person name="Dunham I."/>
            <person name="Carter N.P."/>
            <person name="McVean G."/>
            <person name="Ross M.T."/>
            <person name="Harrow J."/>
            <person name="Olson M.V."/>
            <person name="Beck S."/>
            <person name="Rogers J."/>
            <person name="Bentley D.R."/>
        </authorList>
    </citation>
    <scope>NUCLEOTIDE SEQUENCE [LARGE SCALE GENOMIC DNA]</scope>
</reference>
<reference key="3">
    <citation type="submission" date="2005-09" db="EMBL/GenBank/DDBJ databases">
        <authorList>
            <person name="Mural R.J."/>
            <person name="Istrail S."/>
            <person name="Sutton G.G."/>
            <person name="Florea L."/>
            <person name="Halpern A.L."/>
            <person name="Mobarry C.M."/>
            <person name="Lippert R."/>
            <person name="Walenz B."/>
            <person name="Shatkay H."/>
            <person name="Dew I."/>
            <person name="Miller J.R."/>
            <person name="Flanigan M.J."/>
            <person name="Edwards N.J."/>
            <person name="Bolanos R."/>
            <person name="Fasulo D."/>
            <person name="Halldorsson B.V."/>
            <person name="Hannenhalli S."/>
            <person name="Turner R."/>
            <person name="Yooseph S."/>
            <person name="Lu F."/>
            <person name="Nusskern D.R."/>
            <person name="Shue B.C."/>
            <person name="Zheng X.H."/>
            <person name="Zhong F."/>
            <person name="Delcher A.L."/>
            <person name="Huson D.H."/>
            <person name="Kravitz S.A."/>
            <person name="Mouchard L."/>
            <person name="Reinert K."/>
            <person name="Remington K.A."/>
            <person name="Clark A.G."/>
            <person name="Waterman M.S."/>
            <person name="Eichler E.E."/>
            <person name="Adams M.D."/>
            <person name="Hunkapiller M.W."/>
            <person name="Myers E.W."/>
            <person name="Venter J.C."/>
        </authorList>
    </citation>
    <scope>NUCLEOTIDE SEQUENCE [LARGE SCALE GENOMIC DNA]</scope>
</reference>
<reference key="4">
    <citation type="journal article" date="2004" name="Genome Res.">
        <title>The status, quality, and expansion of the NIH full-length cDNA project: the Mammalian Gene Collection (MGC).</title>
        <authorList>
            <consortium name="The MGC Project Team"/>
        </authorList>
    </citation>
    <scope>NUCLEOTIDE SEQUENCE [LARGE SCALE MRNA] OF 649-861 (ISOFORM 1)</scope>
    <source>
        <tissue>Muscle</tissue>
    </source>
</reference>
<reference key="5">
    <citation type="journal article" date="2008" name="Biochem. Biophys. Res. Commun.">
        <title>The E3 ubiquitin ligase HECTD3 regulates ubiquitination and degradation of Tara.</title>
        <authorList>
            <person name="Yu J."/>
            <person name="Lan J."/>
            <person name="Zhu Y."/>
            <person name="Li X."/>
            <person name="Lai X."/>
            <person name="Xue Y."/>
            <person name="Jin C."/>
            <person name="Huang H."/>
        </authorList>
    </citation>
    <scope>FUNCTION</scope>
    <scope>INTERACTION WITH TRIOBP</scope>
    <scope>MUTAGENESIS OF CYS-823</scope>
</reference>
<reference key="6">
    <citation type="journal article" date="2011" name="BMC Syst. Biol.">
        <title>Initial characterization of the human central proteome.</title>
        <authorList>
            <person name="Burkard T.R."/>
            <person name="Planyavsky M."/>
            <person name="Kaupe I."/>
            <person name="Breitwieser F.P."/>
            <person name="Buerckstuemmer T."/>
            <person name="Bennett K.L."/>
            <person name="Superti-Furga G."/>
            <person name="Colinge J."/>
        </authorList>
    </citation>
    <scope>IDENTIFICATION BY MASS SPECTROMETRY [LARGE SCALE ANALYSIS]</scope>
</reference>
<reference key="7">
    <citation type="journal article" date="2012" name="Mol. Cell. Proteomics">
        <title>Comparative large-scale characterisation of plant vs. mammal proteins reveals similar and idiosyncratic N-alpha acetylation features.</title>
        <authorList>
            <person name="Bienvenut W.V."/>
            <person name="Sumpton D."/>
            <person name="Martinez A."/>
            <person name="Lilla S."/>
            <person name="Espagne C."/>
            <person name="Meinnel T."/>
            <person name="Giglione C."/>
        </authorList>
    </citation>
    <scope>ACETYLATION [LARGE SCALE ANALYSIS] AT ALA-2</scope>
    <scope>CLEAVAGE OF INITIATOR METHIONINE [LARGE SCALE ANALYSIS]</scope>
    <scope>IDENTIFICATION BY MASS SPECTROMETRY [LARGE SCALE ANALYSIS]</scope>
</reference>
<reference key="8">
    <citation type="journal article" date="2012" name="Proc. Natl. Acad. Sci. U.S.A.">
        <title>N-terminal acetylome analyses and functional insights of the N-terminal acetyltransferase NatB.</title>
        <authorList>
            <person name="Van Damme P."/>
            <person name="Lasa M."/>
            <person name="Polevoda B."/>
            <person name="Gazquez C."/>
            <person name="Elosegui-Artola A."/>
            <person name="Kim D.S."/>
            <person name="De Juan-Pardo E."/>
            <person name="Demeyer K."/>
            <person name="Hole K."/>
            <person name="Larrea E."/>
            <person name="Timmerman E."/>
            <person name="Prieto J."/>
            <person name="Arnesen T."/>
            <person name="Sherman F."/>
            <person name="Gevaert K."/>
            <person name="Aldabe R."/>
        </authorList>
    </citation>
    <scope>ACETYLATION [LARGE SCALE ANALYSIS] AT ALA-2</scope>
    <scope>CLEAVAGE OF INITIATOR METHIONINE [LARGE SCALE ANALYSIS]</scope>
    <scope>IDENTIFICATION BY MASS SPECTROMETRY [LARGE SCALE ANALYSIS]</scope>
</reference>
<reference key="9">
    <citation type="journal article" date="2013" name="J. Proteome Res.">
        <title>Toward a comprehensive characterization of a human cancer cell phosphoproteome.</title>
        <authorList>
            <person name="Zhou H."/>
            <person name="Di Palma S."/>
            <person name="Preisinger C."/>
            <person name="Peng M."/>
            <person name="Polat A.N."/>
            <person name="Heck A.J."/>
            <person name="Mohammed S."/>
        </authorList>
    </citation>
    <scope>PHOSPHORYLATION [LARGE SCALE ANALYSIS] AT SER-12</scope>
    <scope>IDENTIFICATION BY MASS SPECTROMETRY [LARGE SCALE ANALYSIS]</scope>
    <source>
        <tissue>Erythroleukemia</tissue>
    </source>
</reference>
<proteinExistence type="evidence at protein level"/>